<reference key="1">
    <citation type="journal article" date="2004" name="Nat. Biotechnol.">
        <title>Complete sequence and comparative genome analysis of the dairy bacterium Streptococcus thermophilus.</title>
        <authorList>
            <person name="Bolotin A."/>
            <person name="Quinquis B."/>
            <person name="Renault P."/>
            <person name="Sorokin A."/>
            <person name="Ehrlich S.D."/>
            <person name="Kulakauskas S."/>
            <person name="Lapidus A."/>
            <person name="Goltsman E."/>
            <person name="Mazur M."/>
            <person name="Pusch G.D."/>
            <person name="Fonstein M."/>
            <person name="Overbeek R."/>
            <person name="Kyprides N."/>
            <person name="Purnelle B."/>
            <person name="Prozzi D."/>
            <person name="Ngui K."/>
            <person name="Masuy D."/>
            <person name="Hancy F."/>
            <person name="Burteau S."/>
            <person name="Boutry M."/>
            <person name="Delcour J."/>
            <person name="Goffeau A."/>
            <person name="Hols P."/>
        </authorList>
    </citation>
    <scope>NUCLEOTIDE SEQUENCE [LARGE SCALE GENOMIC DNA]</scope>
    <source>
        <strain>CNRZ 1066</strain>
    </source>
</reference>
<protein>
    <recommendedName>
        <fullName evidence="1">Ribosome maturation factor RimM</fullName>
    </recommendedName>
</protein>
<accession>Q5LYY1</accession>
<keyword id="KW-0143">Chaperone</keyword>
<keyword id="KW-0963">Cytoplasm</keyword>
<keyword id="KW-0690">Ribosome biogenesis</keyword>
<keyword id="KW-0698">rRNA processing</keyword>
<sequence>MTYYNVGKIVNTQGLQGELRVLSVTDFADERFKKKSVLALFDDKDNYIMDVEVASHRKHKNFDIVKFKGLYHINDVEKYKGCSLKIAEENLTDLDDGEFYYHEIIGLDVYEGNTLIGQVKEILQPGANDVWVVKRKGKKDLLLPYIPPVVLDVDVAAGRIEVELMEGLDDED</sequence>
<comment type="function">
    <text evidence="1">An accessory protein needed during the final step in the assembly of 30S ribosomal subunit, possibly for assembly of the head region. Essential for efficient processing of 16S rRNA. May be needed both before and after RbfA during the maturation of 16S rRNA. It has affinity for free ribosomal 30S subunits but not for 70S ribosomes.</text>
</comment>
<comment type="subunit">
    <text evidence="1">Binds ribosomal protein uS19.</text>
</comment>
<comment type="subcellular location">
    <subcellularLocation>
        <location evidence="1">Cytoplasm</location>
    </subcellularLocation>
</comment>
<comment type="domain">
    <text evidence="1">The PRC barrel domain binds ribosomal protein uS19.</text>
</comment>
<comment type="similarity">
    <text evidence="1">Belongs to the RimM family.</text>
</comment>
<evidence type="ECO:0000255" key="1">
    <source>
        <dbReference type="HAMAP-Rule" id="MF_00014"/>
    </source>
</evidence>
<feature type="chain" id="PRO_0000163371" description="Ribosome maturation factor RimM">
    <location>
        <begin position="1"/>
        <end position="172"/>
    </location>
</feature>
<feature type="domain" description="PRC barrel" evidence="1">
    <location>
        <begin position="96"/>
        <end position="168"/>
    </location>
</feature>
<organism>
    <name type="scientific">Streptococcus thermophilus (strain CNRZ 1066)</name>
    <dbReference type="NCBI Taxonomy" id="299768"/>
    <lineage>
        <taxon>Bacteria</taxon>
        <taxon>Bacillati</taxon>
        <taxon>Bacillota</taxon>
        <taxon>Bacilli</taxon>
        <taxon>Lactobacillales</taxon>
        <taxon>Streptococcaceae</taxon>
        <taxon>Streptococcus</taxon>
    </lineage>
</organism>
<name>RIMM_STRT1</name>
<gene>
    <name evidence="1" type="primary">rimM</name>
    <name type="ordered locus">str1419</name>
</gene>
<dbReference type="EMBL" id="CP000024">
    <property type="protein sequence ID" value="AAV62956.1"/>
    <property type="molecule type" value="Genomic_DNA"/>
</dbReference>
<dbReference type="RefSeq" id="WP_011226286.1">
    <property type="nucleotide sequence ID" value="NC_006449.1"/>
</dbReference>
<dbReference type="SMR" id="Q5LYY1"/>
<dbReference type="GeneID" id="66899179"/>
<dbReference type="KEGG" id="stc:str1419"/>
<dbReference type="HOGENOM" id="CLU_077636_3_1_9"/>
<dbReference type="GO" id="GO:0005737">
    <property type="term" value="C:cytoplasm"/>
    <property type="evidence" value="ECO:0007669"/>
    <property type="project" value="UniProtKB-SubCell"/>
</dbReference>
<dbReference type="GO" id="GO:0005840">
    <property type="term" value="C:ribosome"/>
    <property type="evidence" value="ECO:0007669"/>
    <property type="project" value="InterPro"/>
</dbReference>
<dbReference type="GO" id="GO:0043022">
    <property type="term" value="F:ribosome binding"/>
    <property type="evidence" value="ECO:0007669"/>
    <property type="project" value="InterPro"/>
</dbReference>
<dbReference type="GO" id="GO:0042274">
    <property type="term" value="P:ribosomal small subunit biogenesis"/>
    <property type="evidence" value="ECO:0007669"/>
    <property type="project" value="UniProtKB-UniRule"/>
</dbReference>
<dbReference type="GO" id="GO:0006364">
    <property type="term" value="P:rRNA processing"/>
    <property type="evidence" value="ECO:0007669"/>
    <property type="project" value="UniProtKB-UniRule"/>
</dbReference>
<dbReference type="Gene3D" id="2.30.30.240">
    <property type="entry name" value="PRC-barrel domain"/>
    <property type="match status" value="1"/>
</dbReference>
<dbReference type="Gene3D" id="2.40.30.60">
    <property type="entry name" value="RimM"/>
    <property type="match status" value="1"/>
</dbReference>
<dbReference type="HAMAP" id="MF_00014">
    <property type="entry name" value="Ribosome_mat_RimM"/>
    <property type="match status" value="1"/>
</dbReference>
<dbReference type="InterPro" id="IPR027275">
    <property type="entry name" value="PRC-brl_dom"/>
</dbReference>
<dbReference type="InterPro" id="IPR011033">
    <property type="entry name" value="PRC_barrel-like_sf"/>
</dbReference>
<dbReference type="InterPro" id="IPR011961">
    <property type="entry name" value="RimM"/>
</dbReference>
<dbReference type="InterPro" id="IPR002676">
    <property type="entry name" value="RimM_N"/>
</dbReference>
<dbReference type="InterPro" id="IPR036976">
    <property type="entry name" value="RimM_N_sf"/>
</dbReference>
<dbReference type="InterPro" id="IPR009000">
    <property type="entry name" value="Transl_B-barrel_sf"/>
</dbReference>
<dbReference type="NCBIfam" id="TIGR02273">
    <property type="entry name" value="16S_RimM"/>
    <property type="match status" value="1"/>
</dbReference>
<dbReference type="PANTHER" id="PTHR33692">
    <property type="entry name" value="RIBOSOME MATURATION FACTOR RIMM"/>
    <property type="match status" value="1"/>
</dbReference>
<dbReference type="PANTHER" id="PTHR33692:SF1">
    <property type="entry name" value="RIBOSOME MATURATION FACTOR RIMM"/>
    <property type="match status" value="1"/>
</dbReference>
<dbReference type="Pfam" id="PF05239">
    <property type="entry name" value="PRC"/>
    <property type="match status" value="1"/>
</dbReference>
<dbReference type="Pfam" id="PF01782">
    <property type="entry name" value="RimM"/>
    <property type="match status" value="1"/>
</dbReference>
<dbReference type="SUPFAM" id="SSF50346">
    <property type="entry name" value="PRC-barrel domain"/>
    <property type="match status" value="1"/>
</dbReference>
<dbReference type="SUPFAM" id="SSF50447">
    <property type="entry name" value="Translation proteins"/>
    <property type="match status" value="1"/>
</dbReference>
<proteinExistence type="inferred from homology"/>